<dbReference type="EMBL" id="AE015925">
    <property type="protein sequence ID" value="AAP04949.1"/>
    <property type="molecule type" value="Genomic_DNA"/>
</dbReference>
<dbReference type="RefSeq" id="WP_011006168.1">
    <property type="nucleotide sequence ID" value="NC_003361.3"/>
</dbReference>
<dbReference type="SMR" id="Q824F4"/>
<dbReference type="STRING" id="227941.CCA_00198"/>
<dbReference type="KEGG" id="cca:CCA_00198"/>
<dbReference type="eggNOG" id="COG0211">
    <property type="taxonomic scope" value="Bacteria"/>
</dbReference>
<dbReference type="HOGENOM" id="CLU_095424_4_0_0"/>
<dbReference type="OrthoDB" id="9803474at2"/>
<dbReference type="Proteomes" id="UP000002193">
    <property type="component" value="Chromosome"/>
</dbReference>
<dbReference type="GO" id="GO:0022625">
    <property type="term" value="C:cytosolic large ribosomal subunit"/>
    <property type="evidence" value="ECO:0007669"/>
    <property type="project" value="TreeGrafter"/>
</dbReference>
<dbReference type="GO" id="GO:0003735">
    <property type="term" value="F:structural constituent of ribosome"/>
    <property type="evidence" value="ECO:0007669"/>
    <property type="project" value="InterPro"/>
</dbReference>
<dbReference type="GO" id="GO:0006412">
    <property type="term" value="P:translation"/>
    <property type="evidence" value="ECO:0007669"/>
    <property type="project" value="UniProtKB-UniRule"/>
</dbReference>
<dbReference type="FunFam" id="2.40.50.100:FF:000020">
    <property type="entry name" value="50S ribosomal protein L27"/>
    <property type="match status" value="1"/>
</dbReference>
<dbReference type="Gene3D" id="2.40.50.100">
    <property type="match status" value="1"/>
</dbReference>
<dbReference type="HAMAP" id="MF_00539">
    <property type="entry name" value="Ribosomal_bL27"/>
    <property type="match status" value="1"/>
</dbReference>
<dbReference type="InterPro" id="IPR001684">
    <property type="entry name" value="Ribosomal_bL27"/>
</dbReference>
<dbReference type="NCBIfam" id="TIGR00062">
    <property type="entry name" value="L27"/>
    <property type="match status" value="1"/>
</dbReference>
<dbReference type="PANTHER" id="PTHR15893:SF0">
    <property type="entry name" value="LARGE RIBOSOMAL SUBUNIT PROTEIN BL27M"/>
    <property type="match status" value="1"/>
</dbReference>
<dbReference type="PANTHER" id="PTHR15893">
    <property type="entry name" value="RIBOSOMAL PROTEIN L27"/>
    <property type="match status" value="1"/>
</dbReference>
<dbReference type="Pfam" id="PF01016">
    <property type="entry name" value="Ribosomal_L27"/>
    <property type="match status" value="1"/>
</dbReference>
<dbReference type="PRINTS" id="PR00063">
    <property type="entry name" value="RIBOSOMALL27"/>
</dbReference>
<dbReference type="SUPFAM" id="SSF110324">
    <property type="entry name" value="Ribosomal L27 protein-like"/>
    <property type="match status" value="1"/>
</dbReference>
<accession>Q824F4</accession>
<proteinExistence type="inferred from homology"/>
<gene>
    <name evidence="1" type="primary">rpmA</name>
    <name type="ordered locus">CCA_00198</name>
</gene>
<reference key="1">
    <citation type="journal article" date="2003" name="Nucleic Acids Res.">
        <title>Genome sequence of Chlamydophila caviae (Chlamydia psittaci GPIC): examining the role of niche-specific genes in the evolution of the Chlamydiaceae.</title>
        <authorList>
            <person name="Read T.D."/>
            <person name="Myers G.S.A."/>
            <person name="Brunham R.C."/>
            <person name="Nelson W.C."/>
            <person name="Paulsen I.T."/>
            <person name="Heidelberg J.F."/>
            <person name="Holtzapple E.K."/>
            <person name="Khouri H.M."/>
            <person name="Federova N.B."/>
            <person name="Carty H.A."/>
            <person name="Umayam L.A."/>
            <person name="Haft D.H."/>
            <person name="Peterson J.D."/>
            <person name="Beanan M.J."/>
            <person name="White O."/>
            <person name="Salzberg S.L."/>
            <person name="Hsia R.-C."/>
            <person name="McClarty G."/>
            <person name="Rank R.G."/>
            <person name="Bavoil P.M."/>
            <person name="Fraser C.M."/>
        </authorList>
    </citation>
    <scope>NUCLEOTIDE SEQUENCE [LARGE SCALE GENOMIC DNA]</scope>
    <source>
        <strain>ATCC VR-813 / DSM 19441 / 03DC25 / GPIC</strain>
    </source>
</reference>
<feature type="chain" id="PRO_0000181068" description="Large ribosomal subunit protein bL27">
    <location>
        <begin position="1"/>
        <end position="82"/>
    </location>
</feature>
<feature type="region of interest" description="Disordered" evidence="2">
    <location>
        <begin position="1"/>
        <end position="54"/>
    </location>
</feature>
<name>RL27_CHLCV</name>
<evidence type="ECO:0000255" key="1">
    <source>
        <dbReference type="HAMAP-Rule" id="MF_00539"/>
    </source>
</evidence>
<evidence type="ECO:0000256" key="2">
    <source>
        <dbReference type="SAM" id="MobiDB-lite"/>
    </source>
</evidence>
<evidence type="ECO:0000305" key="3"/>
<comment type="similarity">
    <text evidence="1">Belongs to the bacterial ribosomal protein bL27 family.</text>
</comment>
<protein>
    <recommendedName>
        <fullName evidence="1">Large ribosomal subunit protein bL27</fullName>
    </recommendedName>
    <alternativeName>
        <fullName evidence="3">50S ribosomal protein L27</fullName>
    </alternativeName>
</protein>
<keyword id="KW-0687">Ribonucleoprotein</keyword>
<keyword id="KW-0689">Ribosomal protein</keyword>
<sequence length="82" mass="8949">MAHKKGQGASRNGRDSESKRLGMKVGAGQRVSTGSILVRQRGTKWHPSQNVGRGRDDTLFALVDGIVVTKKTDRTYISVLPE</sequence>
<organism>
    <name type="scientific">Chlamydia caviae (strain ATCC VR-813 / DSM 19441 / 03DC25 / GPIC)</name>
    <name type="common">Chlamydophila caviae</name>
    <dbReference type="NCBI Taxonomy" id="227941"/>
    <lineage>
        <taxon>Bacteria</taxon>
        <taxon>Pseudomonadati</taxon>
        <taxon>Chlamydiota</taxon>
        <taxon>Chlamydiia</taxon>
        <taxon>Chlamydiales</taxon>
        <taxon>Chlamydiaceae</taxon>
        <taxon>Chlamydia/Chlamydophila group</taxon>
        <taxon>Chlamydia</taxon>
    </lineage>
</organism>